<feature type="chain" id="PRO_0000138518" description="Peptide methionine sulfoxide reductase MsrA/MsrB 1">
    <location>
        <begin position="1"/>
        <end position="312"/>
    </location>
</feature>
<feature type="domain" description="MsrB" evidence="2">
    <location>
        <begin position="172"/>
        <end position="295"/>
    </location>
</feature>
<feature type="region of interest" description="Peptide methionine sulfoxide reductase">
    <location>
        <begin position="1"/>
        <end position="155"/>
    </location>
</feature>
<feature type="active site" evidence="1">
    <location>
        <position position="10"/>
    </location>
</feature>
<feature type="active site" description="Nucleophile" evidence="2">
    <location>
        <position position="284"/>
    </location>
</feature>
<feature type="sequence conflict" description="In Ref. 1; AAC44298." evidence="4" ref="1">
    <original>V</original>
    <variation>G</variation>
    <location>
        <position position="29"/>
    </location>
</feature>
<feature type="sequence conflict" description="In Ref. 1; AAC44298." evidence="4" ref="1">
    <original>K</original>
    <variation>E</variation>
    <location>
        <position position="45"/>
    </location>
</feature>
<feature type="sequence conflict" description="In Ref. 1; AAC44298." evidence="4" ref="1">
    <original>TVQVIY</original>
    <variation>AVRVIC</variation>
    <location>
        <begin position="52"/>
        <end position="57"/>
    </location>
</feature>
<feature type="sequence conflict" description="In Ref. 1; AAC44298." evidence="4" ref="1">
    <original>E</original>
    <variation>G</variation>
    <location>
        <position position="61"/>
    </location>
</feature>
<sequence length="312" mass="35703">MAEIYLAGGCFWGLEEYFSRISGVLETSVGYANGQVETTNYQLLKETDHAETVQVIYDEKEVSLREILLYYFRVIDPLSINQQGNDRGRQYRTGIYYQDEADLPAIYTVVQEQERMLGRKIAVEVEQLRHYILAEDYHQDYLRKNPSGYCHIDVTDADKPLIDAANYEKPSQEVLKASLSEESYRVTQEAATEAPFTNAYDQTFEEGIYVDITTGEPLFFAKDKFASGCGWPSFSRPISKELIHYYKDLSHGMERIEVRSRSGSAHLGHVFTDGPRELGGLRYCINSASLRFVAKDEMEKAGYGYLLPYLNK</sequence>
<accession>P0A3R0</accession>
<accession>P35593</accession>
<protein>
    <recommendedName>
        <fullName>Peptide methionine sulfoxide reductase MsrA/MsrB 1</fullName>
    </recommendedName>
    <domain>
        <recommendedName>
            <fullName>Peptide methionine sulfoxide reductase MsrA</fullName>
            <shortName>Protein-methionine-S-oxide reductase</shortName>
            <ecNumber>1.8.4.11</ecNumber>
        </recommendedName>
        <alternativeName>
            <fullName>Peptide-methionine (S)-S-oxide reductase</fullName>
            <shortName>Peptide Met(O) reductase</shortName>
        </alternativeName>
    </domain>
    <domain>
        <recommendedName>
            <fullName>Peptide methionine sulfoxide reductase MsrB</fullName>
            <ecNumber>1.8.4.12</ecNumber>
        </recommendedName>
        <alternativeName>
            <fullName>Peptide-methionine (R)-S-oxide reductase</fullName>
        </alternativeName>
    </domain>
</protein>
<keyword id="KW-1003">Cell membrane</keyword>
<keyword id="KW-0472">Membrane</keyword>
<keyword id="KW-0511">Multifunctional enzyme</keyword>
<keyword id="KW-0560">Oxidoreductase</keyword>
<keyword id="KW-1185">Reference proteome</keyword>
<gene>
    <name type="primary">msrAB1</name>
    <name type="synonym">exp3</name>
    <name type="synonym">msrA</name>
    <name type="ordered locus">spr1217</name>
</gene>
<name>MSAB1_STRR6</name>
<evidence type="ECO:0000250" key="1"/>
<evidence type="ECO:0000255" key="2">
    <source>
        <dbReference type="PROSITE-ProRule" id="PRU01126"/>
    </source>
</evidence>
<evidence type="ECO:0000269" key="3">
    <source>
    </source>
</evidence>
<evidence type="ECO:0000305" key="4"/>
<proteinExistence type="evidence at protein level"/>
<comment type="function">
    <text evidence="1">Has an important function as a repair enzyme for proteins that have been inactivated by oxidation (By similarity). Catalyzes the reversible oxidation-reduction of methionine sulfoxide in proteins to methionine.</text>
</comment>
<comment type="catalytic activity">
    <reaction evidence="3">
        <text>L-methionyl-[protein] + [thioredoxin]-disulfide + H2O = L-methionyl-(S)-S-oxide-[protein] + [thioredoxin]-dithiol</text>
        <dbReference type="Rhea" id="RHEA:14217"/>
        <dbReference type="Rhea" id="RHEA-COMP:10698"/>
        <dbReference type="Rhea" id="RHEA-COMP:10700"/>
        <dbReference type="Rhea" id="RHEA-COMP:12313"/>
        <dbReference type="Rhea" id="RHEA-COMP:12315"/>
        <dbReference type="ChEBI" id="CHEBI:15377"/>
        <dbReference type="ChEBI" id="CHEBI:16044"/>
        <dbReference type="ChEBI" id="CHEBI:29950"/>
        <dbReference type="ChEBI" id="CHEBI:44120"/>
        <dbReference type="ChEBI" id="CHEBI:50058"/>
        <dbReference type="EC" id="1.8.4.11"/>
    </reaction>
</comment>
<comment type="catalytic activity">
    <reaction evidence="3">
        <text>[thioredoxin]-disulfide + L-methionine + H2O = L-methionine (S)-S-oxide + [thioredoxin]-dithiol</text>
        <dbReference type="Rhea" id="RHEA:19993"/>
        <dbReference type="Rhea" id="RHEA-COMP:10698"/>
        <dbReference type="Rhea" id="RHEA-COMP:10700"/>
        <dbReference type="ChEBI" id="CHEBI:15377"/>
        <dbReference type="ChEBI" id="CHEBI:29950"/>
        <dbReference type="ChEBI" id="CHEBI:50058"/>
        <dbReference type="ChEBI" id="CHEBI:57844"/>
        <dbReference type="ChEBI" id="CHEBI:58772"/>
        <dbReference type="EC" id="1.8.4.11"/>
    </reaction>
</comment>
<comment type="catalytic activity">
    <reaction evidence="3">
        <text>L-methionyl-[protein] + [thioredoxin]-disulfide + H2O = L-methionyl-(R)-S-oxide-[protein] + [thioredoxin]-dithiol</text>
        <dbReference type="Rhea" id="RHEA:24164"/>
        <dbReference type="Rhea" id="RHEA-COMP:10698"/>
        <dbReference type="Rhea" id="RHEA-COMP:10700"/>
        <dbReference type="Rhea" id="RHEA-COMP:12313"/>
        <dbReference type="Rhea" id="RHEA-COMP:12314"/>
        <dbReference type="ChEBI" id="CHEBI:15377"/>
        <dbReference type="ChEBI" id="CHEBI:16044"/>
        <dbReference type="ChEBI" id="CHEBI:29950"/>
        <dbReference type="ChEBI" id="CHEBI:45764"/>
        <dbReference type="ChEBI" id="CHEBI:50058"/>
        <dbReference type="EC" id="1.8.4.12"/>
    </reaction>
</comment>
<comment type="subcellular location">
    <subcellularLocation>
        <location evidence="4">Cell membrane</location>
        <topology evidence="4">Peripheral membrane protein</topology>
    </subcellularLocation>
</comment>
<comment type="disruption phenotype">
    <text evidence="3">Mutant exhibits decreased binding to GalNAcbeta1-4Gal containing receptors that are present on type II lung cells and vascular endothelial cells.</text>
</comment>
<comment type="similarity">
    <text evidence="4">In the N-terminal section; belongs to the MsrA Met sulfoxide reductase family.</text>
</comment>
<comment type="similarity">
    <text evidence="4">In the C-terminal section; belongs to the MsrB Met sulfoxide reductase family.</text>
</comment>
<organism>
    <name type="scientific">Streptococcus pneumoniae (strain ATCC BAA-255 / R6)</name>
    <dbReference type="NCBI Taxonomy" id="171101"/>
    <lineage>
        <taxon>Bacteria</taxon>
        <taxon>Bacillati</taxon>
        <taxon>Bacillota</taxon>
        <taxon>Bacilli</taxon>
        <taxon>Lactobacillales</taxon>
        <taxon>Streptococcaceae</taxon>
        <taxon>Streptococcus</taxon>
    </lineage>
</organism>
<reference key="1">
    <citation type="journal article" date="1996" name="Proc. Natl. Acad. Sci. U.S.A.">
        <title>Peptide methionine sulfoxide reductase contributes to the maintenance of adhesins in three major pathogens.</title>
        <authorList>
            <person name="Wizemann T.M."/>
            <person name="Moskovitz J."/>
            <person name="Pearce B.J."/>
            <person name="Cundell D."/>
            <person name="Arvidson C.G."/>
            <person name="So M."/>
            <person name="Weissbach H."/>
            <person name="Brot N."/>
            <person name="Masure H.R."/>
        </authorList>
    </citation>
    <scope>NUCLEOTIDE SEQUENCE [GENOMIC DNA]</scope>
    <scope>CATALYTIC ACTIVITY</scope>
    <scope>POSSIBLE FUNCTION IN VIRULENCE</scope>
    <scope>DISRUPTION PHENOTYPE</scope>
</reference>
<reference key="2">
    <citation type="journal article" date="2001" name="J. Bacteriol.">
        <title>Genome of the bacterium Streptococcus pneumoniae strain R6.</title>
        <authorList>
            <person name="Hoskins J."/>
            <person name="Alborn W.E. Jr."/>
            <person name="Arnold J."/>
            <person name="Blaszczak L.C."/>
            <person name="Burgett S."/>
            <person name="DeHoff B.S."/>
            <person name="Estrem S.T."/>
            <person name="Fritz L."/>
            <person name="Fu D.-J."/>
            <person name="Fuller W."/>
            <person name="Geringer C."/>
            <person name="Gilmour R."/>
            <person name="Glass J.S."/>
            <person name="Khoja H."/>
            <person name="Kraft A.R."/>
            <person name="Lagace R.E."/>
            <person name="LeBlanc D.J."/>
            <person name="Lee L.N."/>
            <person name="Lefkowitz E.J."/>
            <person name="Lu J."/>
            <person name="Matsushima P."/>
            <person name="McAhren S.M."/>
            <person name="McHenney M."/>
            <person name="McLeaster K."/>
            <person name="Mundy C.W."/>
            <person name="Nicas T.I."/>
            <person name="Norris F.H."/>
            <person name="O'Gara M."/>
            <person name="Peery R.B."/>
            <person name="Robertson G.T."/>
            <person name="Rockey P."/>
            <person name="Sun P.-M."/>
            <person name="Winkler M.E."/>
            <person name="Yang Y."/>
            <person name="Young-Bellido M."/>
            <person name="Zhao G."/>
            <person name="Zook C.A."/>
            <person name="Baltz R.H."/>
            <person name="Jaskunas S.R."/>
            <person name="Rosteck P.R. Jr."/>
            <person name="Skatrud P.L."/>
            <person name="Glass J.I."/>
        </authorList>
    </citation>
    <scope>NUCLEOTIDE SEQUENCE [LARGE SCALE GENOMIC DNA]</scope>
    <source>
        <strain>ATCC BAA-255 / R6</strain>
    </source>
</reference>
<reference key="3">
    <citation type="journal article" date="1993" name="Mol. Microbiol.">
        <title>Genetic identification of exported proteins in Streptococcus pneumoniae.</title>
        <authorList>
            <person name="Pearce B.J."/>
            <person name="Yin Y.B."/>
            <person name="Masure H.R."/>
        </authorList>
    </citation>
    <scope>NUCLEOTIDE SEQUENCE [GENOMIC DNA] OF 76-249</scope>
</reference>
<dbReference type="EC" id="1.8.4.11"/>
<dbReference type="EC" id="1.8.4.12"/>
<dbReference type="EMBL" id="U41735">
    <property type="protein sequence ID" value="AAC44298.1"/>
    <property type="molecule type" value="Genomic_DNA"/>
</dbReference>
<dbReference type="EMBL" id="AE007317">
    <property type="protein sequence ID" value="AAL00021.1"/>
    <property type="molecule type" value="Genomic_DNA"/>
</dbReference>
<dbReference type="PIR" id="H98023">
    <property type="entry name" value="H98023"/>
</dbReference>
<dbReference type="RefSeq" id="NP_358810.1">
    <property type="nucleotide sequence ID" value="NC_003098.1"/>
</dbReference>
<dbReference type="SMR" id="P0A3R0"/>
<dbReference type="STRING" id="171101.spr1217"/>
<dbReference type="KEGG" id="spr:spr1217"/>
<dbReference type="PATRIC" id="fig|171101.6.peg.1321"/>
<dbReference type="eggNOG" id="COG0225">
    <property type="taxonomic scope" value="Bacteria"/>
</dbReference>
<dbReference type="eggNOG" id="COG0229">
    <property type="taxonomic scope" value="Bacteria"/>
</dbReference>
<dbReference type="HOGENOM" id="CLU_031040_1_0_9"/>
<dbReference type="Proteomes" id="UP000000586">
    <property type="component" value="Chromosome"/>
</dbReference>
<dbReference type="GO" id="GO:0005737">
    <property type="term" value="C:cytoplasm"/>
    <property type="evidence" value="ECO:0000318"/>
    <property type="project" value="GO_Central"/>
</dbReference>
<dbReference type="GO" id="GO:0005886">
    <property type="term" value="C:plasma membrane"/>
    <property type="evidence" value="ECO:0007669"/>
    <property type="project" value="UniProtKB-SubCell"/>
</dbReference>
<dbReference type="GO" id="GO:0033744">
    <property type="term" value="F:L-methionine:thioredoxin-disulfide S-oxidoreductase activity"/>
    <property type="evidence" value="ECO:0007669"/>
    <property type="project" value="RHEA"/>
</dbReference>
<dbReference type="GO" id="GO:0033743">
    <property type="term" value="F:peptide-methionine (R)-S-oxide reductase activity"/>
    <property type="evidence" value="ECO:0000318"/>
    <property type="project" value="GO_Central"/>
</dbReference>
<dbReference type="GO" id="GO:0008113">
    <property type="term" value="F:peptide-methionine (S)-S-oxide reductase activity"/>
    <property type="evidence" value="ECO:0007669"/>
    <property type="project" value="UniProtKB-UniRule"/>
</dbReference>
<dbReference type="GO" id="GO:0036211">
    <property type="term" value="P:protein modification process"/>
    <property type="evidence" value="ECO:0007669"/>
    <property type="project" value="UniProtKB-UniRule"/>
</dbReference>
<dbReference type="GO" id="GO:0030091">
    <property type="term" value="P:protein repair"/>
    <property type="evidence" value="ECO:0007669"/>
    <property type="project" value="InterPro"/>
</dbReference>
<dbReference type="GO" id="GO:0006979">
    <property type="term" value="P:response to oxidative stress"/>
    <property type="evidence" value="ECO:0007669"/>
    <property type="project" value="InterPro"/>
</dbReference>
<dbReference type="FunFam" id="3.30.1060.10:FF:000007">
    <property type="entry name" value="Peptide methionine sulfoxide reductase msrA/msrB"/>
    <property type="match status" value="1"/>
</dbReference>
<dbReference type="FunFam" id="2.170.150.20:FF:000003">
    <property type="entry name" value="Peptide methionine sulfoxide reductase MsrB"/>
    <property type="match status" value="1"/>
</dbReference>
<dbReference type="Gene3D" id="2.170.150.20">
    <property type="entry name" value="Peptide methionine sulfoxide reductase"/>
    <property type="match status" value="1"/>
</dbReference>
<dbReference type="Gene3D" id="3.30.1060.10">
    <property type="entry name" value="Peptide methionine sulphoxide reductase MsrA"/>
    <property type="match status" value="1"/>
</dbReference>
<dbReference type="HAMAP" id="MF_01401">
    <property type="entry name" value="MsrA"/>
    <property type="match status" value="1"/>
</dbReference>
<dbReference type="HAMAP" id="MF_01400">
    <property type="entry name" value="MsrB"/>
    <property type="match status" value="1"/>
</dbReference>
<dbReference type="InterPro" id="IPR002569">
    <property type="entry name" value="Met_Sox_Rdtase_MsrA_dom"/>
</dbReference>
<dbReference type="InterPro" id="IPR036509">
    <property type="entry name" value="Met_Sox_Rdtase_MsrA_sf"/>
</dbReference>
<dbReference type="InterPro" id="IPR028427">
    <property type="entry name" value="Met_Sox_Rdtase_MsrB"/>
</dbReference>
<dbReference type="InterPro" id="IPR002579">
    <property type="entry name" value="Met_Sox_Rdtase_MsrB_dom"/>
</dbReference>
<dbReference type="InterPro" id="IPR011057">
    <property type="entry name" value="Mss4-like_sf"/>
</dbReference>
<dbReference type="NCBIfam" id="TIGR00401">
    <property type="entry name" value="msrA"/>
    <property type="match status" value="1"/>
</dbReference>
<dbReference type="NCBIfam" id="TIGR00357">
    <property type="entry name" value="peptide-methionine (R)-S-oxide reductase MsrB"/>
    <property type="match status" value="1"/>
</dbReference>
<dbReference type="PANTHER" id="PTHR10173">
    <property type="entry name" value="METHIONINE SULFOXIDE REDUCTASE"/>
    <property type="match status" value="1"/>
</dbReference>
<dbReference type="PANTHER" id="PTHR10173:SF60">
    <property type="entry name" value="PEPTIDE METHIONINE SULFOXIDE REDUCTASE MSRA_MSRB 1"/>
    <property type="match status" value="1"/>
</dbReference>
<dbReference type="Pfam" id="PF01625">
    <property type="entry name" value="PMSR"/>
    <property type="match status" value="1"/>
</dbReference>
<dbReference type="Pfam" id="PF01641">
    <property type="entry name" value="SelR"/>
    <property type="match status" value="1"/>
</dbReference>
<dbReference type="SUPFAM" id="SSF51316">
    <property type="entry name" value="Mss4-like"/>
    <property type="match status" value="1"/>
</dbReference>
<dbReference type="SUPFAM" id="SSF55068">
    <property type="entry name" value="Peptide methionine sulfoxide reductase"/>
    <property type="match status" value="1"/>
</dbReference>
<dbReference type="PROSITE" id="PS51790">
    <property type="entry name" value="MSRB"/>
    <property type="match status" value="1"/>
</dbReference>